<proteinExistence type="inferred from homology"/>
<reference key="1">
    <citation type="submission" date="2008-05" db="EMBL/GenBank/DDBJ databases">
        <title>Complete genome sequence of Clostridium botulinum E3 str. Alaska E43.</title>
        <authorList>
            <person name="Brinkac L.M."/>
            <person name="Brown J.L."/>
            <person name="Bruce D."/>
            <person name="Detter C."/>
            <person name="Munk C."/>
            <person name="Smith L.A."/>
            <person name="Smith T.J."/>
            <person name="Sutton G."/>
            <person name="Brettin T.S."/>
        </authorList>
    </citation>
    <scope>NUCLEOTIDE SEQUENCE [LARGE SCALE GENOMIC DNA]</scope>
    <source>
        <strain>Alaska E43 / Type E3</strain>
    </source>
</reference>
<sequence length="185" mass="20784">MIKDIIKNAEEKMQKTVTVLKSELGTMKAGRANPSMLDKIQIDYYGSMCPLSQAANISSPEPRVLMITPWEKQLLKEIEKAILKSDLGLNPSNDGSIIRLVIPELTEETRKDLVKKVKKTGEESKVAIRSIRRDANDKIKALKKDGDLSEDQVKKGEDDVQKKTDAIIKEIDKIIVDKEKEILAI</sequence>
<accession>B2V4F7</accession>
<dbReference type="EMBL" id="CP001078">
    <property type="protein sequence ID" value="ACD51434.1"/>
    <property type="molecule type" value="Genomic_DNA"/>
</dbReference>
<dbReference type="RefSeq" id="WP_003372657.1">
    <property type="nucleotide sequence ID" value="NC_010723.1"/>
</dbReference>
<dbReference type="SMR" id="B2V4F7"/>
<dbReference type="KEGG" id="cbt:CLH_1212"/>
<dbReference type="HOGENOM" id="CLU_073981_2_0_9"/>
<dbReference type="GO" id="GO:0005737">
    <property type="term" value="C:cytoplasm"/>
    <property type="evidence" value="ECO:0007669"/>
    <property type="project" value="UniProtKB-SubCell"/>
</dbReference>
<dbReference type="GO" id="GO:0043023">
    <property type="term" value="F:ribosomal large subunit binding"/>
    <property type="evidence" value="ECO:0007669"/>
    <property type="project" value="TreeGrafter"/>
</dbReference>
<dbReference type="GO" id="GO:0006415">
    <property type="term" value="P:translational termination"/>
    <property type="evidence" value="ECO:0007669"/>
    <property type="project" value="UniProtKB-UniRule"/>
</dbReference>
<dbReference type="CDD" id="cd00520">
    <property type="entry name" value="RRF"/>
    <property type="match status" value="1"/>
</dbReference>
<dbReference type="FunFam" id="1.10.132.20:FF:000001">
    <property type="entry name" value="Ribosome-recycling factor"/>
    <property type="match status" value="1"/>
</dbReference>
<dbReference type="FunFam" id="3.30.1360.40:FF:000001">
    <property type="entry name" value="Ribosome-recycling factor"/>
    <property type="match status" value="1"/>
</dbReference>
<dbReference type="Gene3D" id="3.30.1360.40">
    <property type="match status" value="1"/>
</dbReference>
<dbReference type="Gene3D" id="1.10.132.20">
    <property type="entry name" value="Ribosome-recycling factor"/>
    <property type="match status" value="1"/>
</dbReference>
<dbReference type="HAMAP" id="MF_00040">
    <property type="entry name" value="RRF"/>
    <property type="match status" value="1"/>
</dbReference>
<dbReference type="InterPro" id="IPR002661">
    <property type="entry name" value="Ribosome_recyc_fac"/>
</dbReference>
<dbReference type="InterPro" id="IPR023584">
    <property type="entry name" value="Ribosome_recyc_fac_dom"/>
</dbReference>
<dbReference type="InterPro" id="IPR036191">
    <property type="entry name" value="RRF_sf"/>
</dbReference>
<dbReference type="NCBIfam" id="TIGR00496">
    <property type="entry name" value="frr"/>
    <property type="match status" value="1"/>
</dbReference>
<dbReference type="PANTHER" id="PTHR20982:SF3">
    <property type="entry name" value="MITOCHONDRIAL RIBOSOME RECYCLING FACTOR PSEUDO 1"/>
    <property type="match status" value="1"/>
</dbReference>
<dbReference type="PANTHER" id="PTHR20982">
    <property type="entry name" value="RIBOSOME RECYCLING FACTOR"/>
    <property type="match status" value="1"/>
</dbReference>
<dbReference type="Pfam" id="PF01765">
    <property type="entry name" value="RRF"/>
    <property type="match status" value="1"/>
</dbReference>
<dbReference type="SUPFAM" id="SSF55194">
    <property type="entry name" value="Ribosome recycling factor, RRF"/>
    <property type="match status" value="1"/>
</dbReference>
<protein>
    <recommendedName>
        <fullName evidence="1">Ribosome-recycling factor</fullName>
        <shortName evidence="1">RRF</shortName>
    </recommendedName>
    <alternativeName>
        <fullName evidence="1">Ribosome-releasing factor</fullName>
    </alternativeName>
</protein>
<evidence type="ECO:0000255" key="1">
    <source>
        <dbReference type="HAMAP-Rule" id="MF_00040"/>
    </source>
</evidence>
<name>RRF_CLOBA</name>
<comment type="function">
    <text evidence="1">Responsible for the release of ribosomes from messenger RNA at the termination of protein biosynthesis. May increase the efficiency of translation by recycling ribosomes from one round of translation to another.</text>
</comment>
<comment type="subcellular location">
    <subcellularLocation>
        <location evidence="1">Cytoplasm</location>
    </subcellularLocation>
</comment>
<comment type="similarity">
    <text evidence="1">Belongs to the RRF family.</text>
</comment>
<gene>
    <name evidence="1" type="primary">frr</name>
    <name type="ordered locus">CLH_1212</name>
</gene>
<organism>
    <name type="scientific">Clostridium botulinum (strain Alaska E43 / Type E3)</name>
    <dbReference type="NCBI Taxonomy" id="508767"/>
    <lineage>
        <taxon>Bacteria</taxon>
        <taxon>Bacillati</taxon>
        <taxon>Bacillota</taxon>
        <taxon>Clostridia</taxon>
        <taxon>Eubacteriales</taxon>
        <taxon>Clostridiaceae</taxon>
        <taxon>Clostridium</taxon>
    </lineage>
</organism>
<keyword id="KW-0963">Cytoplasm</keyword>
<keyword id="KW-0648">Protein biosynthesis</keyword>
<feature type="chain" id="PRO_1000090726" description="Ribosome-recycling factor">
    <location>
        <begin position="1"/>
        <end position="185"/>
    </location>
</feature>